<proteinExistence type="inferred from homology"/>
<keyword id="KW-0687">Ribonucleoprotein</keyword>
<keyword id="KW-0689">Ribosomal protein</keyword>
<keyword id="KW-0694">RNA-binding</keyword>
<keyword id="KW-0699">rRNA-binding</keyword>
<accession>B9LJD2</accession>
<comment type="function">
    <text evidence="1">One of the primary rRNA binding proteins, it binds directly near the 3'-end of the 23S rRNA, where it nucleates assembly of the 50S subunit.</text>
</comment>
<comment type="subunit">
    <text evidence="1">Part of the 50S ribosomal subunit. Forms a cluster with proteins L14 and L19.</text>
</comment>
<comment type="similarity">
    <text evidence="1">Belongs to the universal ribosomal protein uL3 family.</text>
</comment>
<name>RL3_CHLSY</name>
<sequence length="210" mass="22596">MIHGLLGRKIGMMQYFTAQGMAIPVTVIAAGPCIVTQIRTPERDGYSAVQLGYEEVEPRKLTKPQQGHLKASGGKMLRYLREFSADDPQAHTPGEVVTVELFRPGQKVDISGTSKGRGFAGVVKRHGFRGGPKTHGQSDRHRAPGSIGAGTTPGRVWKGQRMAGRMGGTRVTIQNLEVVEVLPEQNLLLVKGSVPGARNGLLQIRKAVKG</sequence>
<protein>
    <recommendedName>
        <fullName evidence="1">Large ribosomal subunit protein uL3</fullName>
    </recommendedName>
    <alternativeName>
        <fullName evidence="3">50S ribosomal protein L3</fullName>
    </alternativeName>
</protein>
<gene>
    <name evidence="1" type="primary">rplC</name>
    <name type="ordered locus">Chy400_2556</name>
</gene>
<reference key="1">
    <citation type="submission" date="2009-01" db="EMBL/GenBank/DDBJ databases">
        <title>Complete sequence of Chloroflexus sp. Y-400-fl.</title>
        <authorList>
            <consortium name="US DOE Joint Genome Institute"/>
            <person name="Lucas S."/>
            <person name="Copeland A."/>
            <person name="Lapidus A."/>
            <person name="Glavina del Rio T."/>
            <person name="Dalin E."/>
            <person name="Tice H."/>
            <person name="Bruce D."/>
            <person name="Goodwin L."/>
            <person name="Pitluck S."/>
            <person name="Sims D."/>
            <person name="Kiss H."/>
            <person name="Brettin T."/>
            <person name="Detter J.C."/>
            <person name="Han C."/>
            <person name="Larimer F."/>
            <person name="Land M."/>
            <person name="Hauser L."/>
            <person name="Kyrpides N."/>
            <person name="Ovchinnikova G."/>
            <person name="Bryant D.A."/>
            <person name="Richardson P."/>
        </authorList>
    </citation>
    <scope>NUCLEOTIDE SEQUENCE [LARGE SCALE GENOMIC DNA]</scope>
    <source>
        <strain>ATCC 29364 / DSM 637 / Y-400-fl</strain>
    </source>
</reference>
<feature type="chain" id="PRO_1000165876" description="Large ribosomal subunit protein uL3">
    <location>
        <begin position="1"/>
        <end position="210"/>
    </location>
</feature>
<feature type="region of interest" description="Disordered" evidence="2">
    <location>
        <begin position="126"/>
        <end position="152"/>
    </location>
</feature>
<evidence type="ECO:0000255" key="1">
    <source>
        <dbReference type="HAMAP-Rule" id="MF_01325"/>
    </source>
</evidence>
<evidence type="ECO:0000256" key="2">
    <source>
        <dbReference type="SAM" id="MobiDB-lite"/>
    </source>
</evidence>
<evidence type="ECO:0000305" key="3"/>
<dbReference type="EMBL" id="CP001364">
    <property type="protein sequence ID" value="ACM53948.1"/>
    <property type="molecule type" value="Genomic_DNA"/>
</dbReference>
<dbReference type="SMR" id="B9LJD2"/>
<dbReference type="KEGG" id="chl:Chy400_2556"/>
<dbReference type="HOGENOM" id="CLU_044142_4_1_0"/>
<dbReference type="OrthoDB" id="9806135at2"/>
<dbReference type="GO" id="GO:0022625">
    <property type="term" value="C:cytosolic large ribosomal subunit"/>
    <property type="evidence" value="ECO:0007669"/>
    <property type="project" value="TreeGrafter"/>
</dbReference>
<dbReference type="GO" id="GO:0019843">
    <property type="term" value="F:rRNA binding"/>
    <property type="evidence" value="ECO:0007669"/>
    <property type="project" value="UniProtKB-UniRule"/>
</dbReference>
<dbReference type="GO" id="GO:0003735">
    <property type="term" value="F:structural constituent of ribosome"/>
    <property type="evidence" value="ECO:0007669"/>
    <property type="project" value="InterPro"/>
</dbReference>
<dbReference type="GO" id="GO:0006412">
    <property type="term" value="P:translation"/>
    <property type="evidence" value="ECO:0007669"/>
    <property type="project" value="UniProtKB-UniRule"/>
</dbReference>
<dbReference type="FunFam" id="2.40.30.10:FF:000004">
    <property type="entry name" value="50S ribosomal protein L3"/>
    <property type="match status" value="1"/>
</dbReference>
<dbReference type="FunFam" id="3.30.160.810:FF:000001">
    <property type="entry name" value="50S ribosomal protein L3"/>
    <property type="match status" value="1"/>
</dbReference>
<dbReference type="Gene3D" id="3.30.160.810">
    <property type="match status" value="1"/>
</dbReference>
<dbReference type="Gene3D" id="2.40.30.10">
    <property type="entry name" value="Translation factors"/>
    <property type="match status" value="1"/>
</dbReference>
<dbReference type="HAMAP" id="MF_01325_B">
    <property type="entry name" value="Ribosomal_uL3_B"/>
    <property type="match status" value="1"/>
</dbReference>
<dbReference type="InterPro" id="IPR000597">
    <property type="entry name" value="Ribosomal_uL3"/>
</dbReference>
<dbReference type="InterPro" id="IPR019927">
    <property type="entry name" value="Ribosomal_uL3_bac/org-type"/>
</dbReference>
<dbReference type="InterPro" id="IPR019926">
    <property type="entry name" value="Ribosomal_uL3_CS"/>
</dbReference>
<dbReference type="InterPro" id="IPR009000">
    <property type="entry name" value="Transl_B-barrel_sf"/>
</dbReference>
<dbReference type="NCBIfam" id="TIGR03625">
    <property type="entry name" value="L3_bact"/>
    <property type="match status" value="1"/>
</dbReference>
<dbReference type="PANTHER" id="PTHR11229">
    <property type="entry name" value="50S RIBOSOMAL PROTEIN L3"/>
    <property type="match status" value="1"/>
</dbReference>
<dbReference type="PANTHER" id="PTHR11229:SF16">
    <property type="entry name" value="LARGE RIBOSOMAL SUBUNIT PROTEIN UL3C"/>
    <property type="match status" value="1"/>
</dbReference>
<dbReference type="Pfam" id="PF00297">
    <property type="entry name" value="Ribosomal_L3"/>
    <property type="match status" value="1"/>
</dbReference>
<dbReference type="SUPFAM" id="SSF50447">
    <property type="entry name" value="Translation proteins"/>
    <property type="match status" value="1"/>
</dbReference>
<dbReference type="PROSITE" id="PS00474">
    <property type="entry name" value="RIBOSOMAL_L3"/>
    <property type="match status" value="1"/>
</dbReference>
<organism>
    <name type="scientific">Chloroflexus aurantiacus (strain ATCC 29364 / DSM 637 / Y-400-fl)</name>
    <dbReference type="NCBI Taxonomy" id="480224"/>
    <lineage>
        <taxon>Bacteria</taxon>
        <taxon>Bacillati</taxon>
        <taxon>Chloroflexota</taxon>
        <taxon>Chloroflexia</taxon>
        <taxon>Chloroflexales</taxon>
        <taxon>Chloroflexineae</taxon>
        <taxon>Chloroflexaceae</taxon>
        <taxon>Chloroflexus</taxon>
    </lineage>
</organism>